<keyword id="KW-0997">Cell inner membrane</keyword>
<keyword id="KW-1003">Cell membrane</keyword>
<keyword id="KW-0963">Cytoplasm</keyword>
<keyword id="KW-0472">Membrane</keyword>
<keyword id="KW-1185">Reference proteome</keyword>
<protein>
    <recommendedName>
        <fullName evidence="1">High frequency lysogenization protein HflD homolog</fullName>
    </recommendedName>
</protein>
<sequence>MAHTLYDRTIAFASICQAVKLVQLVAQNGNCDREILEACLNSITVTNPSNTIEIYGNESNLRLGLETLSQEIDSSPTGSEITRYLVSVMALERKLSGRRDSMGQLGDRIDVIIRQKDHFDLLDDQMVSNLASIYLDIISPLGPRIQVTGAPAHLQQQQVQHKVRALLLAAVRGAVLWRQVGGKRRHLIFGRKQMVEQAKILLARC</sequence>
<name>HFLD_PHOPR</name>
<gene>
    <name evidence="1" type="primary">hflD</name>
    <name type="ordered locus">PBPRA1146</name>
</gene>
<evidence type="ECO:0000255" key="1">
    <source>
        <dbReference type="HAMAP-Rule" id="MF_00695"/>
    </source>
</evidence>
<dbReference type="EMBL" id="CR378666">
    <property type="protein sequence ID" value="CAG19557.1"/>
    <property type="molecule type" value="Genomic_DNA"/>
</dbReference>
<dbReference type="RefSeq" id="WP_011217889.1">
    <property type="nucleotide sequence ID" value="NC_006370.1"/>
</dbReference>
<dbReference type="SMR" id="Q6LT19"/>
<dbReference type="STRING" id="298386.PBPRA1146"/>
<dbReference type="KEGG" id="ppr:PBPRA1146"/>
<dbReference type="eggNOG" id="COG2915">
    <property type="taxonomic scope" value="Bacteria"/>
</dbReference>
<dbReference type="HOGENOM" id="CLU_098920_0_0_6"/>
<dbReference type="Proteomes" id="UP000000593">
    <property type="component" value="Chromosome 1"/>
</dbReference>
<dbReference type="GO" id="GO:0005737">
    <property type="term" value="C:cytoplasm"/>
    <property type="evidence" value="ECO:0007669"/>
    <property type="project" value="UniProtKB-SubCell"/>
</dbReference>
<dbReference type="GO" id="GO:0005886">
    <property type="term" value="C:plasma membrane"/>
    <property type="evidence" value="ECO:0007669"/>
    <property type="project" value="UniProtKB-SubCell"/>
</dbReference>
<dbReference type="Gene3D" id="1.10.3890.10">
    <property type="entry name" value="HflD-like"/>
    <property type="match status" value="1"/>
</dbReference>
<dbReference type="HAMAP" id="MF_00695">
    <property type="entry name" value="HflD_protein"/>
    <property type="match status" value="1"/>
</dbReference>
<dbReference type="InterPro" id="IPR007451">
    <property type="entry name" value="HflD"/>
</dbReference>
<dbReference type="InterPro" id="IPR035932">
    <property type="entry name" value="HflD-like_sf"/>
</dbReference>
<dbReference type="NCBIfam" id="NF001246">
    <property type="entry name" value="PRK00218.1-2"/>
    <property type="match status" value="1"/>
</dbReference>
<dbReference type="NCBIfam" id="NF001248">
    <property type="entry name" value="PRK00218.1-4"/>
    <property type="match status" value="1"/>
</dbReference>
<dbReference type="PANTHER" id="PTHR38100">
    <property type="entry name" value="HIGH FREQUENCY LYSOGENIZATION PROTEIN HFLD"/>
    <property type="match status" value="1"/>
</dbReference>
<dbReference type="PANTHER" id="PTHR38100:SF1">
    <property type="entry name" value="HIGH FREQUENCY LYSOGENIZATION PROTEIN HFLD"/>
    <property type="match status" value="1"/>
</dbReference>
<dbReference type="Pfam" id="PF04356">
    <property type="entry name" value="DUF489"/>
    <property type="match status" value="1"/>
</dbReference>
<dbReference type="SUPFAM" id="SSF101322">
    <property type="entry name" value="YcfC-like"/>
    <property type="match status" value="1"/>
</dbReference>
<reference key="1">
    <citation type="journal article" date="2005" name="Science">
        <title>Life at depth: Photobacterium profundum genome sequence and expression analysis.</title>
        <authorList>
            <person name="Vezzi A."/>
            <person name="Campanaro S."/>
            <person name="D'Angelo M."/>
            <person name="Simonato F."/>
            <person name="Vitulo N."/>
            <person name="Lauro F.M."/>
            <person name="Cestaro A."/>
            <person name="Malacrida G."/>
            <person name="Simionati B."/>
            <person name="Cannata N."/>
            <person name="Romualdi C."/>
            <person name="Bartlett D.H."/>
            <person name="Valle G."/>
        </authorList>
    </citation>
    <scope>NUCLEOTIDE SEQUENCE [LARGE SCALE GENOMIC DNA]</scope>
    <source>
        <strain>ATCC BAA-1253 / SS9</strain>
    </source>
</reference>
<organism>
    <name type="scientific">Photobacterium profundum (strain SS9)</name>
    <dbReference type="NCBI Taxonomy" id="298386"/>
    <lineage>
        <taxon>Bacteria</taxon>
        <taxon>Pseudomonadati</taxon>
        <taxon>Pseudomonadota</taxon>
        <taxon>Gammaproteobacteria</taxon>
        <taxon>Vibrionales</taxon>
        <taxon>Vibrionaceae</taxon>
        <taxon>Photobacterium</taxon>
    </lineage>
</organism>
<comment type="subcellular location">
    <subcellularLocation>
        <location>Cytoplasm</location>
    </subcellularLocation>
    <subcellularLocation>
        <location evidence="1">Cell inner membrane</location>
        <topology evidence="1">Peripheral membrane protein</topology>
        <orientation evidence="1">Cytoplasmic side</orientation>
    </subcellularLocation>
</comment>
<comment type="similarity">
    <text evidence="1">Belongs to the HflD family.</text>
</comment>
<accession>Q6LT19</accession>
<proteinExistence type="inferred from homology"/>
<feature type="chain" id="PRO_1000045427" description="High frequency lysogenization protein HflD homolog">
    <location>
        <begin position="1"/>
        <end position="205"/>
    </location>
</feature>